<dbReference type="EC" id="5.1.1.7" evidence="1"/>
<dbReference type="EMBL" id="CP000766">
    <property type="protein sequence ID" value="ABY72549.1"/>
    <property type="molecule type" value="Genomic_DNA"/>
</dbReference>
<dbReference type="RefSeq" id="WP_012150772.1">
    <property type="nucleotide sequence ID" value="NC_010263.3"/>
</dbReference>
<dbReference type="SMR" id="B0BXH3"/>
<dbReference type="GeneID" id="79937325"/>
<dbReference type="KEGG" id="rrj:RrIowa_0691"/>
<dbReference type="eggNOG" id="COG0253">
    <property type="taxonomic scope" value="Bacteria"/>
</dbReference>
<dbReference type="HOGENOM" id="CLU_053306_1_0_5"/>
<dbReference type="UniPathway" id="UPA00034">
    <property type="reaction ID" value="UER00025"/>
</dbReference>
<dbReference type="Proteomes" id="UP000000796">
    <property type="component" value="Chromosome"/>
</dbReference>
<dbReference type="GO" id="GO:0005829">
    <property type="term" value="C:cytosol"/>
    <property type="evidence" value="ECO:0007669"/>
    <property type="project" value="TreeGrafter"/>
</dbReference>
<dbReference type="GO" id="GO:0008837">
    <property type="term" value="F:diaminopimelate epimerase activity"/>
    <property type="evidence" value="ECO:0007669"/>
    <property type="project" value="UniProtKB-UniRule"/>
</dbReference>
<dbReference type="GO" id="GO:0009089">
    <property type="term" value="P:lysine biosynthetic process via diaminopimelate"/>
    <property type="evidence" value="ECO:0007669"/>
    <property type="project" value="UniProtKB-UniRule"/>
</dbReference>
<dbReference type="Gene3D" id="3.10.310.10">
    <property type="entry name" value="Diaminopimelate Epimerase, Chain A, domain 1"/>
    <property type="match status" value="2"/>
</dbReference>
<dbReference type="HAMAP" id="MF_00197">
    <property type="entry name" value="DAP_epimerase"/>
    <property type="match status" value="1"/>
</dbReference>
<dbReference type="InterPro" id="IPR018510">
    <property type="entry name" value="DAP_epimerase_AS"/>
</dbReference>
<dbReference type="InterPro" id="IPR001653">
    <property type="entry name" value="DAP_epimerase_DapF"/>
</dbReference>
<dbReference type="NCBIfam" id="TIGR00652">
    <property type="entry name" value="DapF"/>
    <property type="match status" value="1"/>
</dbReference>
<dbReference type="PANTHER" id="PTHR31689:SF0">
    <property type="entry name" value="DIAMINOPIMELATE EPIMERASE"/>
    <property type="match status" value="1"/>
</dbReference>
<dbReference type="PANTHER" id="PTHR31689">
    <property type="entry name" value="DIAMINOPIMELATE EPIMERASE, CHLOROPLASTIC"/>
    <property type="match status" value="1"/>
</dbReference>
<dbReference type="Pfam" id="PF01678">
    <property type="entry name" value="DAP_epimerase"/>
    <property type="match status" value="2"/>
</dbReference>
<dbReference type="SUPFAM" id="SSF54506">
    <property type="entry name" value="Diaminopimelate epimerase-like"/>
    <property type="match status" value="2"/>
</dbReference>
<dbReference type="PROSITE" id="PS01326">
    <property type="entry name" value="DAP_EPIMERASE"/>
    <property type="match status" value="1"/>
</dbReference>
<reference key="1">
    <citation type="journal article" date="2008" name="Infect. Immun.">
        <title>Genomic comparison of virulent Rickettsia rickettsii Sheila Smith and avirulent Rickettsia rickettsii Iowa.</title>
        <authorList>
            <person name="Ellison D.W."/>
            <person name="Clark T.R."/>
            <person name="Sturdevant D.E."/>
            <person name="Virtaneva K."/>
            <person name="Porcella S.F."/>
            <person name="Hackstadt T."/>
        </authorList>
    </citation>
    <scope>NUCLEOTIDE SEQUENCE [LARGE SCALE GENOMIC DNA]</scope>
    <source>
        <strain>Iowa</strain>
    </source>
</reference>
<accession>B0BXH3</accession>
<keyword id="KW-0028">Amino-acid biosynthesis</keyword>
<keyword id="KW-0963">Cytoplasm</keyword>
<keyword id="KW-0413">Isomerase</keyword>
<keyword id="KW-0457">Lysine biosynthesis</keyword>
<gene>
    <name evidence="1" type="primary">dapF</name>
    <name type="ordered locus">RrIowa_0691</name>
</gene>
<sequence length="270" mass="30067">MISKINFVKMHGLGNDFVIVNKRDLSSSYDLSQLAKNMAERHTGIGCDQFILYEEHNDFYEMIIYNIDGSSAKLCGNATRCLAKLIYLDTGKQDITVMVGNKKLLCNVNDENNISVNVGSVSFNEAWMPSRDKVWEFAERYMIDLKETICVDIGNPHVVIFSKLEPQDQKIVGERLQAKELFADGVNVNFAEVKDNKIYLSVWERGVGLTLACGSGACGSFAAGLKHGFIHSPSTIVFKHGNLTMKEENGNIIMQGAATLVARGEYYCEQ</sequence>
<comment type="function">
    <text evidence="1">Catalyzes the stereoinversion of LL-2,6-diaminopimelate (L,L-DAP) to meso-diaminopimelate (meso-DAP), a precursor of L-lysine and an essential component of the bacterial peptidoglycan.</text>
</comment>
<comment type="catalytic activity">
    <reaction evidence="1">
        <text>(2S,6S)-2,6-diaminopimelate = meso-2,6-diaminopimelate</text>
        <dbReference type="Rhea" id="RHEA:15393"/>
        <dbReference type="ChEBI" id="CHEBI:57609"/>
        <dbReference type="ChEBI" id="CHEBI:57791"/>
        <dbReference type="EC" id="5.1.1.7"/>
    </reaction>
</comment>
<comment type="pathway">
    <text evidence="1">Amino-acid biosynthesis; L-lysine biosynthesis via DAP pathway; DL-2,6-diaminopimelate from LL-2,6-diaminopimelate: step 1/1.</text>
</comment>
<comment type="subunit">
    <text evidence="1">Homodimer.</text>
</comment>
<comment type="subcellular location">
    <subcellularLocation>
        <location evidence="1">Cytoplasm</location>
    </subcellularLocation>
</comment>
<comment type="similarity">
    <text evidence="1">Belongs to the diaminopimelate epimerase family.</text>
</comment>
<protein>
    <recommendedName>
        <fullName evidence="1">Diaminopimelate epimerase</fullName>
        <shortName evidence="1">DAP epimerase</shortName>
        <ecNumber evidence="1">5.1.1.7</ecNumber>
    </recommendedName>
    <alternativeName>
        <fullName evidence="1">PLP-independent amino acid racemase</fullName>
    </alternativeName>
</protein>
<feature type="chain" id="PRO_1000077703" description="Diaminopimelate epimerase">
    <location>
        <begin position="1"/>
        <end position="270"/>
    </location>
</feature>
<feature type="active site" description="Proton donor" evidence="1">
    <location>
        <position position="75"/>
    </location>
</feature>
<feature type="active site" description="Proton acceptor" evidence="1">
    <location>
        <position position="213"/>
    </location>
</feature>
<feature type="binding site" evidence="1">
    <location>
        <position position="15"/>
    </location>
    <ligand>
        <name>substrate</name>
    </ligand>
</feature>
<feature type="binding site" evidence="1">
    <location>
        <position position="49"/>
    </location>
    <ligand>
        <name>substrate</name>
    </ligand>
</feature>
<feature type="binding site" evidence="1">
    <location>
        <position position="66"/>
    </location>
    <ligand>
        <name>substrate</name>
    </ligand>
</feature>
<feature type="binding site" evidence="1">
    <location>
        <begin position="76"/>
        <end position="77"/>
    </location>
    <ligand>
        <name>substrate</name>
    </ligand>
</feature>
<feature type="binding site" evidence="1">
    <location>
        <position position="155"/>
    </location>
    <ligand>
        <name>substrate</name>
    </ligand>
</feature>
<feature type="binding site" evidence="1">
    <location>
        <position position="187"/>
    </location>
    <ligand>
        <name>substrate</name>
    </ligand>
</feature>
<feature type="binding site" evidence="1">
    <location>
        <begin position="204"/>
        <end position="205"/>
    </location>
    <ligand>
        <name>substrate</name>
    </ligand>
</feature>
<feature type="binding site" evidence="1">
    <location>
        <begin position="214"/>
        <end position="215"/>
    </location>
    <ligand>
        <name>substrate</name>
    </ligand>
</feature>
<feature type="site" description="Could be important to modulate the pK values of the two catalytic cysteine residues" evidence="1">
    <location>
        <position position="157"/>
    </location>
</feature>
<feature type="site" description="Could be important to modulate the pK values of the two catalytic cysteine residues" evidence="1">
    <location>
        <position position="204"/>
    </location>
</feature>
<organism>
    <name type="scientific">Rickettsia rickettsii (strain Iowa)</name>
    <dbReference type="NCBI Taxonomy" id="452659"/>
    <lineage>
        <taxon>Bacteria</taxon>
        <taxon>Pseudomonadati</taxon>
        <taxon>Pseudomonadota</taxon>
        <taxon>Alphaproteobacteria</taxon>
        <taxon>Rickettsiales</taxon>
        <taxon>Rickettsiaceae</taxon>
        <taxon>Rickettsieae</taxon>
        <taxon>Rickettsia</taxon>
        <taxon>spotted fever group</taxon>
    </lineage>
</organism>
<evidence type="ECO:0000255" key="1">
    <source>
        <dbReference type="HAMAP-Rule" id="MF_00197"/>
    </source>
</evidence>
<name>DAPF_RICRO</name>
<proteinExistence type="inferred from homology"/>